<gene>
    <name type="ordered locus">At2g25185</name>
    <name type="ORF">T22F11</name>
</gene>
<dbReference type="EMBL" id="AC007070">
    <property type="status" value="NOT_ANNOTATED_CDS"/>
    <property type="molecule type" value="Genomic_DNA"/>
</dbReference>
<dbReference type="EMBL" id="CP002685">
    <property type="protein sequence ID" value="AEC07668.1"/>
    <property type="molecule type" value="Genomic_DNA"/>
</dbReference>
<dbReference type="RefSeq" id="NP_001031411.1">
    <property type="nucleotide sequence ID" value="NM_001036334.2"/>
</dbReference>
<dbReference type="PaxDb" id="3702-AT2G25185.1"/>
<dbReference type="ProteomicsDB" id="224651"/>
<dbReference type="EnsemblPlants" id="AT2G25185.1">
    <property type="protein sequence ID" value="AT2G25185.1"/>
    <property type="gene ID" value="AT2G25185"/>
</dbReference>
<dbReference type="GeneID" id="3768529"/>
<dbReference type="Gramene" id="AT2G25185.1">
    <property type="protein sequence ID" value="AT2G25185.1"/>
    <property type="gene ID" value="AT2G25185"/>
</dbReference>
<dbReference type="KEGG" id="ath:AT2G25185"/>
<dbReference type="Araport" id="AT2G25185"/>
<dbReference type="TAIR" id="AT2G25185"/>
<dbReference type="eggNOG" id="ENOG502R2CG">
    <property type="taxonomic scope" value="Eukaryota"/>
</dbReference>
<dbReference type="HOGENOM" id="CLU_172799_0_0_1"/>
<dbReference type="InParanoid" id="Q2V459"/>
<dbReference type="OMA" id="CKSIRCS"/>
<dbReference type="OrthoDB" id="1037611at2759"/>
<dbReference type="PhylomeDB" id="Q2V459"/>
<dbReference type="PRO" id="PR:Q2V459"/>
<dbReference type="Proteomes" id="UP000006548">
    <property type="component" value="Chromosome 2"/>
</dbReference>
<dbReference type="ExpressionAtlas" id="Q2V459">
    <property type="expression patterns" value="baseline"/>
</dbReference>
<dbReference type="GO" id="GO:0005576">
    <property type="term" value="C:extracellular region"/>
    <property type="evidence" value="ECO:0007669"/>
    <property type="project" value="UniProtKB-SubCell"/>
</dbReference>
<dbReference type="GO" id="GO:0050832">
    <property type="term" value="P:defense response to fungus"/>
    <property type="evidence" value="ECO:0007669"/>
    <property type="project" value="UniProtKB-KW"/>
</dbReference>
<dbReference type="GO" id="GO:0031640">
    <property type="term" value="P:killing of cells of another organism"/>
    <property type="evidence" value="ECO:0007669"/>
    <property type="project" value="UniProtKB-KW"/>
</dbReference>
<sequence length="102" mass="10861">MSASKATMLILFALFLSDILLVSIPRAEAQLIVPCKTSEQCKSIRCSNGSAQCVNKQCQCPSLKQIYSVTDVSCKTVSDCVASHQCPTGLSACIEGKCICLP</sequence>
<keyword id="KW-0929">Antimicrobial</keyword>
<keyword id="KW-1015">Disulfide bond</keyword>
<keyword id="KW-0295">Fungicide</keyword>
<keyword id="KW-0611">Plant defense</keyword>
<keyword id="KW-1185">Reference proteome</keyword>
<keyword id="KW-0964">Secreted</keyword>
<keyword id="KW-0732">Signal</keyword>
<protein>
    <recommendedName>
        <fullName>Putative defensin-like protein 298</fullName>
    </recommendedName>
</protein>
<name>DF298_ARATH</name>
<feature type="signal peptide" evidence="2">
    <location>
        <begin position="1"/>
        <end position="29"/>
    </location>
</feature>
<feature type="chain" id="PRO_0000379757" description="Putative defensin-like protein 298">
    <location>
        <begin position="30"/>
        <end position="102"/>
    </location>
</feature>
<feature type="disulfide bond" evidence="1">
    <location>
        <begin position="35"/>
        <end position="53"/>
    </location>
</feature>
<feature type="disulfide bond" evidence="1">
    <location>
        <begin position="41"/>
        <end position="58"/>
    </location>
</feature>
<feature type="disulfide bond" evidence="1">
    <location>
        <begin position="46"/>
        <end position="60"/>
    </location>
</feature>
<feature type="disulfide bond" evidence="1">
    <location>
        <begin position="74"/>
        <end position="93"/>
    </location>
</feature>
<feature type="disulfide bond" evidence="1">
    <location>
        <begin position="80"/>
        <end position="98"/>
    </location>
</feature>
<feature type="disulfide bond" evidence="1">
    <location>
        <begin position="86"/>
        <end position="100"/>
    </location>
</feature>
<organism>
    <name type="scientific">Arabidopsis thaliana</name>
    <name type="common">Mouse-ear cress</name>
    <dbReference type="NCBI Taxonomy" id="3702"/>
    <lineage>
        <taxon>Eukaryota</taxon>
        <taxon>Viridiplantae</taxon>
        <taxon>Streptophyta</taxon>
        <taxon>Embryophyta</taxon>
        <taxon>Tracheophyta</taxon>
        <taxon>Spermatophyta</taxon>
        <taxon>Magnoliopsida</taxon>
        <taxon>eudicotyledons</taxon>
        <taxon>Gunneridae</taxon>
        <taxon>Pentapetalae</taxon>
        <taxon>rosids</taxon>
        <taxon>malvids</taxon>
        <taxon>Brassicales</taxon>
        <taxon>Brassicaceae</taxon>
        <taxon>Camelineae</taxon>
        <taxon>Arabidopsis</taxon>
    </lineage>
</organism>
<reference key="1">
    <citation type="journal article" date="1999" name="Nature">
        <title>Sequence and analysis of chromosome 2 of the plant Arabidopsis thaliana.</title>
        <authorList>
            <person name="Lin X."/>
            <person name="Kaul S."/>
            <person name="Rounsley S.D."/>
            <person name="Shea T.P."/>
            <person name="Benito M.-I."/>
            <person name="Town C.D."/>
            <person name="Fujii C.Y."/>
            <person name="Mason T.M."/>
            <person name="Bowman C.L."/>
            <person name="Barnstead M.E."/>
            <person name="Feldblyum T.V."/>
            <person name="Buell C.R."/>
            <person name="Ketchum K.A."/>
            <person name="Lee J.J."/>
            <person name="Ronning C.M."/>
            <person name="Koo H.L."/>
            <person name="Moffat K.S."/>
            <person name="Cronin L.A."/>
            <person name="Shen M."/>
            <person name="Pai G."/>
            <person name="Van Aken S."/>
            <person name="Umayam L."/>
            <person name="Tallon L.J."/>
            <person name="Gill J.E."/>
            <person name="Adams M.D."/>
            <person name="Carrera A.J."/>
            <person name="Creasy T.H."/>
            <person name="Goodman H.M."/>
            <person name="Somerville C.R."/>
            <person name="Copenhaver G.P."/>
            <person name="Preuss D."/>
            <person name="Nierman W.C."/>
            <person name="White O."/>
            <person name="Eisen J.A."/>
            <person name="Salzberg S.L."/>
            <person name="Fraser C.M."/>
            <person name="Venter J.C."/>
        </authorList>
    </citation>
    <scope>NUCLEOTIDE SEQUENCE [LARGE SCALE GENOMIC DNA]</scope>
    <source>
        <strain>cv. Columbia</strain>
    </source>
</reference>
<reference key="2">
    <citation type="journal article" date="2017" name="Plant J.">
        <title>Araport11: a complete reannotation of the Arabidopsis thaliana reference genome.</title>
        <authorList>
            <person name="Cheng C.Y."/>
            <person name="Krishnakumar V."/>
            <person name="Chan A.P."/>
            <person name="Thibaud-Nissen F."/>
            <person name="Schobel S."/>
            <person name="Town C.D."/>
        </authorList>
    </citation>
    <scope>GENOME REANNOTATION</scope>
    <source>
        <strain>cv. Columbia</strain>
    </source>
</reference>
<reference key="3">
    <citation type="journal article" date="2005" name="Plant Physiol.">
        <title>Genome organization of more than 300 defensin-like genes in Arabidopsis.</title>
        <authorList>
            <person name="Silverstein K.A.T."/>
            <person name="Graham M.A."/>
            <person name="Paape T.D."/>
            <person name="VandenBosch K.A."/>
        </authorList>
    </citation>
    <scope>GENE FAMILY</scope>
</reference>
<proteinExistence type="inferred from homology"/>
<comment type="subcellular location">
    <subcellularLocation>
        <location evidence="1">Secreted</location>
    </subcellularLocation>
</comment>
<comment type="similarity">
    <text evidence="3">Belongs to the DEFL family.</text>
</comment>
<comment type="caution">
    <text evidence="3">Contains 6 disulfide bonds instead of the 4 disulfide bonds, which are conserved features of the family.</text>
</comment>
<accession>Q2V459</accession>
<evidence type="ECO:0000250" key="1"/>
<evidence type="ECO:0000255" key="2"/>
<evidence type="ECO:0000305" key="3"/>